<protein>
    <recommendedName>
        <fullName>Transcriptional regulator MraZ</fullName>
    </recommendedName>
</protein>
<name>MRAZ_NOCSJ</name>
<evidence type="ECO:0000255" key="1">
    <source>
        <dbReference type="HAMAP-Rule" id="MF_01008"/>
    </source>
</evidence>
<evidence type="ECO:0000255" key="2">
    <source>
        <dbReference type="PROSITE-ProRule" id="PRU01076"/>
    </source>
</evidence>
<sequence length="144" mass="16169">MNFLGTYTPKLDEKGRLFLPAKFRDRLAEGLVVTQGQENCLVVWPTDVFMEEARRAQATPMTVRGARDYARVLFAGADEGALDKQGRINIAAPLREYAALDREVVVIGVMDRIEIWDPVRWREYSAGAQAKFAELDEQPAHTSG</sequence>
<proteinExistence type="inferred from homology"/>
<accession>A1SL89</accession>
<organism>
    <name type="scientific">Nocardioides sp. (strain ATCC BAA-499 / JS614)</name>
    <dbReference type="NCBI Taxonomy" id="196162"/>
    <lineage>
        <taxon>Bacteria</taxon>
        <taxon>Bacillati</taxon>
        <taxon>Actinomycetota</taxon>
        <taxon>Actinomycetes</taxon>
        <taxon>Propionibacteriales</taxon>
        <taxon>Nocardioidaceae</taxon>
        <taxon>Nocardioides</taxon>
    </lineage>
</organism>
<dbReference type="EMBL" id="CP000509">
    <property type="protein sequence ID" value="ABL82574.1"/>
    <property type="molecule type" value="Genomic_DNA"/>
</dbReference>
<dbReference type="RefSeq" id="WP_011756508.1">
    <property type="nucleotide sequence ID" value="NC_008699.1"/>
</dbReference>
<dbReference type="SMR" id="A1SL89"/>
<dbReference type="STRING" id="196162.Noca_3072"/>
<dbReference type="KEGG" id="nca:Noca_3072"/>
<dbReference type="eggNOG" id="COG2001">
    <property type="taxonomic scope" value="Bacteria"/>
</dbReference>
<dbReference type="HOGENOM" id="CLU_107907_0_5_11"/>
<dbReference type="OrthoDB" id="9807753at2"/>
<dbReference type="Proteomes" id="UP000000640">
    <property type="component" value="Chromosome"/>
</dbReference>
<dbReference type="GO" id="GO:0005737">
    <property type="term" value="C:cytoplasm"/>
    <property type="evidence" value="ECO:0007669"/>
    <property type="project" value="UniProtKB-UniRule"/>
</dbReference>
<dbReference type="GO" id="GO:0009295">
    <property type="term" value="C:nucleoid"/>
    <property type="evidence" value="ECO:0007669"/>
    <property type="project" value="UniProtKB-SubCell"/>
</dbReference>
<dbReference type="GO" id="GO:0003700">
    <property type="term" value="F:DNA-binding transcription factor activity"/>
    <property type="evidence" value="ECO:0007669"/>
    <property type="project" value="UniProtKB-UniRule"/>
</dbReference>
<dbReference type="GO" id="GO:0000976">
    <property type="term" value="F:transcription cis-regulatory region binding"/>
    <property type="evidence" value="ECO:0007669"/>
    <property type="project" value="TreeGrafter"/>
</dbReference>
<dbReference type="GO" id="GO:2000143">
    <property type="term" value="P:negative regulation of DNA-templated transcription initiation"/>
    <property type="evidence" value="ECO:0007669"/>
    <property type="project" value="TreeGrafter"/>
</dbReference>
<dbReference type="CDD" id="cd16321">
    <property type="entry name" value="MraZ_C"/>
    <property type="match status" value="1"/>
</dbReference>
<dbReference type="CDD" id="cd16320">
    <property type="entry name" value="MraZ_N"/>
    <property type="match status" value="1"/>
</dbReference>
<dbReference type="Gene3D" id="3.40.1550.20">
    <property type="entry name" value="Transcriptional regulator MraZ domain"/>
    <property type="match status" value="1"/>
</dbReference>
<dbReference type="HAMAP" id="MF_01008">
    <property type="entry name" value="MraZ"/>
    <property type="match status" value="1"/>
</dbReference>
<dbReference type="InterPro" id="IPR003444">
    <property type="entry name" value="MraZ"/>
</dbReference>
<dbReference type="InterPro" id="IPR035644">
    <property type="entry name" value="MraZ_C"/>
</dbReference>
<dbReference type="InterPro" id="IPR020603">
    <property type="entry name" value="MraZ_dom"/>
</dbReference>
<dbReference type="InterPro" id="IPR035642">
    <property type="entry name" value="MraZ_N"/>
</dbReference>
<dbReference type="InterPro" id="IPR038619">
    <property type="entry name" value="MraZ_sf"/>
</dbReference>
<dbReference type="InterPro" id="IPR007159">
    <property type="entry name" value="SpoVT-AbrB_dom"/>
</dbReference>
<dbReference type="InterPro" id="IPR037914">
    <property type="entry name" value="SpoVT-AbrB_sf"/>
</dbReference>
<dbReference type="NCBIfam" id="TIGR00242">
    <property type="entry name" value="division/cell wall cluster transcriptional repressor MraZ"/>
    <property type="match status" value="1"/>
</dbReference>
<dbReference type="PANTHER" id="PTHR34701">
    <property type="entry name" value="TRANSCRIPTIONAL REGULATOR MRAZ"/>
    <property type="match status" value="1"/>
</dbReference>
<dbReference type="PANTHER" id="PTHR34701:SF1">
    <property type="entry name" value="TRANSCRIPTIONAL REGULATOR MRAZ"/>
    <property type="match status" value="1"/>
</dbReference>
<dbReference type="Pfam" id="PF02381">
    <property type="entry name" value="MraZ"/>
    <property type="match status" value="2"/>
</dbReference>
<dbReference type="SUPFAM" id="SSF89447">
    <property type="entry name" value="AbrB/MazE/MraZ-like"/>
    <property type="match status" value="1"/>
</dbReference>
<dbReference type="PROSITE" id="PS51740">
    <property type="entry name" value="SPOVT_ABRB"/>
    <property type="match status" value="2"/>
</dbReference>
<keyword id="KW-0963">Cytoplasm</keyword>
<keyword id="KW-0238">DNA-binding</keyword>
<keyword id="KW-1185">Reference proteome</keyword>
<keyword id="KW-0677">Repeat</keyword>
<keyword id="KW-0804">Transcription</keyword>
<keyword id="KW-0805">Transcription regulation</keyword>
<gene>
    <name evidence="1" type="primary">mraZ</name>
    <name type="ordered locus">Noca_3072</name>
</gene>
<feature type="chain" id="PRO_0000318888" description="Transcriptional regulator MraZ">
    <location>
        <begin position="1"/>
        <end position="144"/>
    </location>
</feature>
<feature type="domain" description="SpoVT-AbrB 1" evidence="2">
    <location>
        <begin position="6"/>
        <end position="48"/>
    </location>
</feature>
<feature type="domain" description="SpoVT-AbrB 2" evidence="2">
    <location>
        <begin position="77"/>
        <end position="120"/>
    </location>
</feature>
<reference key="1">
    <citation type="submission" date="2006-12" db="EMBL/GenBank/DDBJ databases">
        <title>Complete sequence of chromosome 1 of Nocardioides sp. JS614.</title>
        <authorList>
            <person name="Copeland A."/>
            <person name="Lucas S."/>
            <person name="Lapidus A."/>
            <person name="Barry K."/>
            <person name="Detter J.C."/>
            <person name="Glavina del Rio T."/>
            <person name="Hammon N."/>
            <person name="Israni S."/>
            <person name="Dalin E."/>
            <person name="Tice H."/>
            <person name="Pitluck S."/>
            <person name="Thompson L.S."/>
            <person name="Brettin T."/>
            <person name="Bruce D."/>
            <person name="Han C."/>
            <person name="Tapia R."/>
            <person name="Schmutz J."/>
            <person name="Larimer F."/>
            <person name="Land M."/>
            <person name="Hauser L."/>
            <person name="Kyrpides N."/>
            <person name="Kim E."/>
            <person name="Mattes T."/>
            <person name="Gossett J."/>
            <person name="Richardson P."/>
        </authorList>
    </citation>
    <scope>NUCLEOTIDE SEQUENCE [LARGE SCALE GENOMIC DNA]</scope>
    <source>
        <strain>ATCC BAA-499 / JS614</strain>
    </source>
</reference>
<comment type="subunit">
    <text evidence="1">Forms oligomers.</text>
</comment>
<comment type="subcellular location">
    <subcellularLocation>
        <location evidence="1">Cytoplasm</location>
        <location evidence="1">Nucleoid</location>
    </subcellularLocation>
</comment>
<comment type="similarity">
    <text evidence="1">Belongs to the MraZ family.</text>
</comment>